<gene>
    <name evidence="1" type="primary">rplU</name>
    <name type="ordered locus">CLM_3384</name>
</gene>
<accession>C1FVW8</accession>
<name>RL21_CLOBJ</name>
<dbReference type="EMBL" id="CP001581">
    <property type="protein sequence ID" value="ACO84726.1"/>
    <property type="molecule type" value="Genomic_DNA"/>
</dbReference>
<dbReference type="RefSeq" id="WP_012704380.1">
    <property type="nucleotide sequence ID" value="NC_012563.1"/>
</dbReference>
<dbReference type="SMR" id="C1FVW8"/>
<dbReference type="KEGG" id="cby:CLM_3384"/>
<dbReference type="eggNOG" id="COG0261">
    <property type="taxonomic scope" value="Bacteria"/>
</dbReference>
<dbReference type="HOGENOM" id="CLU_061463_3_2_9"/>
<dbReference type="Proteomes" id="UP000001374">
    <property type="component" value="Chromosome"/>
</dbReference>
<dbReference type="GO" id="GO:0005737">
    <property type="term" value="C:cytoplasm"/>
    <property type="evidence" value="ECO:0007669"/>
    <property type="project" value="UniProtKB-ARBA"/>
</dbReference>
<dbReference type="GO" id="GO:1990904">
    <property type="term" value="C:ribonucleoprotein complex"/>
    <property type="evidence" value="ECO:0007669"/>
    <property type="project" value="UniProtKB-KW"/>
</dbReference>
<dbReference type="GO" id="GO:0005840">
    <property type="term" value="C:ribosome"/>
    <property type="evidence" value="ECO:0007669"/>
    <property type="project" value="UniProtKB-KW"/>
</dbReference>
<dbReference type="GO" id="GO:0019843">
    <property type="term" value="F:rRNA binding"/>
    <property type="evidence" value="ECO:0007669"/>
    <property type="project" value="UniProtKB-UniRule"/>
</dbReference>
<dbReference type="GO" id="GO:0003735">
    <property type="term" value="F:structural constituent of ribosome"/>
    <property type="evidence" value="ECO:0007669"/>
    <property type="project" value="InterPro"/>
</dbReference>
<dbReference type="GO" id="GO:0006412">
    <property type="term" value="P:translation"/>
    <property type="evidence" value="ECO:0007669"/>
    <property type="project" value="UniProtKB-UniRule"/>
</dbReference>
<dbReference type="HAMAP" id="MF_01363">
    <property type="entry name" value="Ribosomal_bL21"/>
    <property type="match status" value="1"/>
</dbReference>
<dbReference type="InterPro" id="IPR028909">
    <property type="entry name" value="bL21-like"/>
</dbReference>
<dbReference type="InterPro" id="IPR036164">
    <property type="entry name" value="bL21-like_sf"/>
</dbReference>
<dbReference type="InterPro" id="IPR001787">
    <property type="entry name" value="Ribosomal_bL21"/>
</dbReference>
<dbReference type="InterPro" id="IPR018258">
    <property type="entry name" value="Ribosomal_bL21_CS"/>
</dbReference>
<dbReference type="NCBIfam" id="TIGR00061">
    <property type="entry name" value="L21"/>
    <property type="match status" value="1"/>
</dbReference>
<dbReference type="PANTHER" id="PTHR21349">
    <property type="entry name" value="50S RIBOSOMAL PROTEIN L21"/>
    <property type="match status" value="1"/>
</dbReference>
<dbReference type="PANTHER" id="PTHR21349:SF0">
    <property type="entry name" value="LARGE RIBOSOMAL SUBUNIT PROTEIN BL21M"/>
    <property type="match status" value="1"/>
</dbReference>
<dbReference type="Pfam" id="PF00829">
    <property type="entry name" value="Ribosomal_L21p"/>
    <property type="match status" value="1"/>
</dbReference>
<dbReference type="SUPFAM" id="SSF141091">
    <property type="entry name" value="L21p-like"/>
    <property type="match status" value="1"/>
</dbReference>
<dbReference type="PROSITE" id="PS01169">
    <property type="entry name" value="RIBOSOMAL_L21"/>
    <property type="match status" value="1"/>
</dbReference>
<feature type="chain" id="PRO_1000166712" description="Large ribosomal subunit protein bL21">
    <location>
        <begin position="1"/>
        <end position="104"/>
    </location>
</feature>
<proteinExistence type="inferred from homology"/>
<organism>
    <name type="scientific">Clostridium botulinum (strain Kyoto / Type A2)</name>
    <dbReference type="NCBI Taxonomy" id="536232"/>
    <lineage>
        <taxon>Bacteria</taxon>
        <taxon>Bacillati</taxon>
        <taxon>Bacillota</taxon>
        <taxon>Clostridia</taxon>
        <taxon>Eubacteriales</taxon>
        <taxon>Clostridiaceae</taxon>
        <taxon>Clostridium</taxon>
    </lineage>
</organism>
<comment type="function">
    <text evidence="1">This protein binds to 23S rRNA in the presence of protein L20.</text>
</comment>
<comment type="subunit">
    <text evidence="1">Part of the 50S ribosomal subunit. Contacts protein L20.</text>
</comment>
<comment type="similarity">
    <text evidence="1">Belongs to the bacterial ribosomal protein bL21 family.</text>
</comment>
<sequence length="104" mass="11538">MYAVVVTGGKQYKVAEGDVLFVEKLTADVDSTVELDNVLLVGKDNEETVVGKPMVEGAKVTAKVLAQGKAKKVVVFKYKPKKDYRKKQGHRQPYTKIQIEKINA</sequence>
<protein>
    <recommendedName>
        <fullName evidence="1">Large ribosomal subunit protein bL21</fullName>
    </recommendedName>
    <alternativeName>
        <fullName evidence="2">50S ribosomal protein L21</fullName>
    </alternativeName>
</protein>
<reference key="1">
    <citation type="submission" date="2008-10" db="EMBL/GenBank/DDBJ databases">
        <title>Genome sequence of Clostridium botulinum A2 Kyoto.</title>
        <authorList>
            <person name="Shrivastava S."/>
            <person name="Brinkac L.M."/>
            <person name="Brown J.L."/>
            <person name="Bruce D."/>
            <person name="Detter C.C."/>
            <person name="Johnson E.A."/>
            <person name="Munk C.A."/>
            <person name="Smith L.A."/>
            <person name="Smith T.J."/>
            <person name="Sutton G."/>
            <person name="Brettin T.S."/>
        </authorList>
    </citation>
    <scope>NUCLEOTIDE SEQUENCE [LARGE SCALE GENOMIC DNA]</scope>
    <source>
        <strain>Kyoto / Type A2</strain>
    </source>
</reference>
<keyword id="KW-0687">Ribonucleoprotein</keyword>
<keyword id="KW-0689">Ribosomal protein</keyword>
<keyword id="KW-0694">RNA-binding</keyword>
<keyword id="KW-0699">rRNA-binding</keyword>
<evidence type="ECO:0000255" key="1">
    <source>
        <dbReference type="HAMAP-Rule" id="MF_01363"/>
    </source>
</evidence>
<evidence type="ECO:0000305" key="2"/>